<accession>B1I9F8</accession>
<name>GPDA_STRPI</name>
<sequence>MEKQTVAVLGPGSWGTALSQVLNDNGHEVRIWGNLPEQINEINTHHTNKHYFKDVVLDENIIAYTDLAETLKDVDAILFVVPTKVTRLVAQQVAQTLDHKVIIMHASKGLEPDSHKRLSTILEEEIPEHLRSDIVVVSGPSHAEETIVRDLTLITAASKDLQTAQYVQELFSNHYFRLYTNTDVIGVETAGALKNIIAVGAGALHGLGFGDNAKAAIIARGLAEITRLGVALGASPLTYSGLSGVGDLIVTGTSIHSRNWRAGDALGRGESLADIEANMGMVIEGISTTRAAYELAQELGVYMPITQAIYQVIYHGTNIKDAIYDIMNNEFKAENEWS</sequence>
<keyword id="KW-0963">Cytoplasm</keyword>
<keyword id="KW-0444">Lipid biosynthesis</keyword>
<keyword id="KW-0443">Lipid metabolism</keyword>
<keyword id="KW-0520">NAD</keyword>
<keyword id="KW-0521">NADP</keyword>
<keyword id="KW-0547">Nucleotide-binding</keyword>
<keyword id="KW-0560">Oxidoreductase</keyword>
<keyword id="KW-0594">Phospholipid biosynthesis</keyword>
<keyword id="KW-1208">Phospholipid metabolism</keyword>
<evidence type="ECO:0000255" key="1">
    <source>
        <dbReference type="HAMAP-Rule" id="MF_00394"/>
    </source>
</evidence>
<reference key="1">
    <citation type="journal article" date="2010" name="Genome Biol.">
        <title>Structure and dynamics of the pan-genome of Streptococcus pneumoniae and closely related species.</title>
        <authorList>
            <person name="Donati C."/>
            <person name="Hiller N.L."/>
            <person name="Tettelin H."/>
            <person name="Muzzi A."/>
            <person name="Croucher N.J."/>
            <person name="Angiuoli S.V."/>
            <person name="Oggioni M."/>
            <person name="Dunning Hotopp J.C."/>
            <person name="Hu F.Z."/>
            <person name="Riley D.R."/>
            <person name="Covacci A."/>
            <person name="Mitchell T.J."/>
            <person name="Bentley S.D."/>
            <person name="Kilian M."/>
            <person name="Ehrlich G.D."/>
            <person name="Rappuoli R."/>
            <person name="Moxon E.R."/>
            <person name="Masignani V."/>
        </authorList>
    </citation>
    <scope>NUCLEOTIDE SEQUENCE [LARGE SCALE GENOMIC DNA]</scope>
    <source>
        <strain>Hungary19A-6</strain>
    </source>
</reference>
<comment type="function">
    <text evidence="1">Catalyzes the reduction of the glycolytic intermediate dihydroxyacetone phosphate (DHAP) to sn-glycerol 3-phosphate (G3P), the key precursor for phospholipid synthesis.</text>
</comment>
<comment type="catalytic activity">
    <reaction evidence="1">
        <text>sn-glycerol 3-phosphate + NAD(+) = dihydroxyacetone phosphate + NADH + H(+)</text>
        <dbReference type="Rhea" id="RHEA:11092"/>
        <dbReference type="ChEBI" id="CHEBI:15378"/>
        <dbReference type="ChEBI" id="CHEBI:57540"/>
        <dbReference type="ChEBI" id="CHEBI:57597"/>
        <dbReference type="ChEBI" id="CHEBI:57642"/>
        <dbReference type="ChEBI" id="CHEBI:57945"/>
        <dbReference type="EC" id="1.1.1.94"/>
    </reaction>
    <physiologicalReaction direction="right-to-left" evidence="1">
        <dbReference type="Rhea" id="RHEA:11094"/>
    </physiologicalReaction>
</comment>
<comment type="catalytic activity">
    <reaction evidence="1">
        <text>sn-glycerol 3-phosphate + NADP(+) = dihydroxyacetone phosphate + NADPH + H(+)</text>
        <dbReference type="Rhea" id="RHEA:11096"/>
        <dbReference type="ChEBI" id="CHEBI:15378"/>
        <dbReference type="ChEBI" id="CHEBI:57597"/>
        <dbReference type="ChEBI" id="CHEBI:57642"/>
        <dbReference type="ChEBI" id="CHEBI:57783"/>
        <dbReference type="ChEBI" id="CHEBI:58349"/>
        <dbReference type="EC" id="1.1.1.94"/>
    </reaction>
    <physiologicalReaction direction="right-to-left" evidence="1">
        <dbReference type="Rhea" id="RHEA:11098"/>
    </physiologicalReaction>
</comment>
<comment type="pathway">
    <text evidence="1">Membrane lipid metabolism; glycerophospholipid metabolism.</text>
</comment>
<comment type="subcellular location">
    <subcellularLocation>
        <location evidence="1">Cytoplasm</location>
    </subcellularLocation>
</comment>
<comment type="similarity">
    <text evidence="1">Belongs to the NAD-dependent glycerol-3-phosphate dehydrogenase family.</text>
</comment>
<gene>
    <name evidence="1" type="primary">gpsA</name>
    <name type="ordered locus">SPH_2278</name>
</gene>
<dbReference type="EC" id="1.1.1.94" evidence="1"/>
<dbReference type="EMBL" id="CP000936">
    <property type="protein sequence ID" value="ACA37417.1"/>
    <property type="molecule type" value="Genomic_DNA"/>
</dbReference>
<dbReference type="RefSeq" id="WP_000415102.1">
    <property type="nucleotide sequence ID" value="NC_010380.1"/>
</dbReference>
<dbReference type="SMR" id="B1I9F8"/>
<dbReference type="KEGG" id="spv:SPH_2278"/>
<dbReference type="HOGENOM" id="CLU_033449_0_2_9"/>
<dbReference type="UniPathway" id="UPA00940"/>
<dbReference type="Proteomes" id="UP000002163">
    <property type="component" value="Chromosome"/>
</dbReference>
<dbReference type="GO" id="GO:0005829">
    <property type="term" value="C:cytosol"/>
    <property type="evidence" value="ECO:0007669"/>
    <property type="project" value="TreeGrafter"/>
</dbReference>
<dbReference type="GO" id="GO:0047952">
    <property type="term" value="F:glycerol-3-phosphate dehydrogenase [NAD(P)+] activity"/>
    <property type="evidence" value="ECO:0007669"/>
    <property type="project" value="UniProtKB-UniRule"/>
</dbReference>
<dbReference type="GO" id="GO:0051287">
    <property type="term" value="F:NAD binding"/>
    <property type="evidence" value="ECO:0007669"/>
    <property type="project" value="InterPro"/>
</dbReference>
<dbReference type="GO" id="GO:0005975">
    <property type="term" value="P:carbohydrate metabolic process"/>
    <property type="evidence" value="ECO:0007669"/>
    <property type="project" value="InterPro"/>
</dbReference>
<dbReference type="GO" id="GO:0046167">
    <property type="term" value="P:glycerol-3-phosphate biosynthetic process"/>
    <property type="evidence" value="ECO:0007669"/>
    <property type="project" value="UniProtKB-UniRule"/>
</dbReference>
<dbReference type="GO" id="GO:0046168">
    <property type="term" value="P:glycerol-3-phosphate catabolic process"/>
    <property type="evidence" value="ECO:0007669"/>
    <property type="project" value="InterPro"/>
</dbReference>
<dbReference type="GO" id="GO:0006650">
    <property type="term" value="P:glycerophospholipid metabolic process"/>
    <property type="evidence" value="ECO:0007669"/>
    <property type="project" value="UniProtKB-UniRule"/>
</dbReference>
<dbReference type="GO" id="GO:0008654">
    <property type="term" value="P:phospholipid biosynthetic process"/>
    <property type="evidence" value="ECO:0007669"/>
    <property type="project" value="UniProtKB-KW"/>
</dbReference>
<dbReference type="FunFam" id="1.10.1040.10:FF:000001">
    <property type="entry name" value="Glycerol-3-phosphate dehydrogenase [NAD(P)+]"/>
    <property type="match status" value="1"/>
</dbReference>
<dbReference type="FunFam" id="3.40.50.720:FF:000019">
    <property type="entry name" value="Glycerol-3-phosphate dehydrogenase [NAD(P)+]"/>
    <property type="match status" value="1"/>
</dbReference>
<dbReference type="Gene3D" id="1.10.1040.10">
    <property type="entry name" value="N-(1-d-carboxylethyl)-l-norvaline Dehydrogenase, domain 2"/>
    <property type="match status" value="1"/>
</dbReference>
<dbReference type="Gene3D" id="3.40.50.720">
    <property type="entry name" value="NAD(P)-binding Rossmann-like Domain"/>
    <property type="match status" value="1"/>
</dbReference>
<dbReference type="HAMAP" id="MF_00394">
    <property type="entry name" value="NAD_Glyc3P_dehydrog"/>
    <property type="match status" value="1"/>
</dbReference>
<dbReference type="InterPro" id="IPR008927">
    <property type="entry name" value="6-PGluconate_DH-like_C_sf"/>
</dbReference>
<dbReference type="InterPro" id="IPR013328">
    <property type="entry name" value="6PGD_dom2"/>
</dbReference>
<dbReference type="InterPro" id="IPR006168">
    <property type="entry name" value="G3P_DH_NAD-dep"/>
</dbReference>
<dbReference type="InterPro" id="IPR006109">
    <property type="entry name" value="G3P_DH_NAD-dep_C"/>
</dbReference>
<dbReference type="InterPro" id="IPR011128">
    <property type="entry name" value="G3P_DH_NAD-dep_N"/>
</dbReference>
<dbReference type="InterPro" id="IPR036291">
    <property type="entry name" value="NAD(P)-bd_dom_sf"/>
</dbReference>
<dbReference type="NCBIfam" id="NF000940">
    <property type="entry name" value="PRK00094.1-2"/>
    <property type="match status" value="1"/>
</dbReference>
<dbReference type="NCBIfam" id="NF000941">
    <property type="entry name" value="PRK00094.1-3"/>
    <property type="match status" value="1"/>
</dbReference>
<dbReference type="NCBIfam" id="NF000942">
    <property type="entry name" value="PRK00094.1-4"/>
    <property type="match status" value="1"/>
</dbReference>
<dbReference type="PANTHER" id="PTHR11728">
    <property type="entry name" value="GLYCEROL-3-PHOSPHATE DEHYDROGENASE"/>
    <property type="match status" value="1"/>
</dbReference>
<dbReference type="PANTHER" id="PTHR11728:SF1">
    <property type="entry name" value="GLYCEROL-3-PHOSPHATE DEHYDROGENASE [NAD(+)] 2, CHLOROPLASTIC"/>
    <property type="match status" value="1"/>
</dbReference>
<dbReference type="Pfam" id="PF07479">
    <property type="entry name" value="NAD_Gly3P_dh_C"/>
    <property type="match status" value="1"/>
</dbReference>
<dbReference type="Pfam" id="PF01210">
    <property type="entry name" value="NAD_Gly3P_dh_N"/>
    <property type="match status" value="1"/>
</dbReference>
<dbReference type="PIRSF" id="PIRSF000114">
    <property type="entry name" value="Glycerol-3-P_dh"/>
    <property type="match status" value="1"/>
</dbReference>
<dbReference type="PRINTS" id="PR00077">
    <property type="entry name" value="GPDHDRGNASE"/>
</dbReference>
<dbReference type="SUPFAM" id="SSF48179">
    <property type="entry name" value="6-phosphogluconate dehydrogenase C-terminal domain-like"/>
    <property type="match status" value="1"/>
</dbReference>
<dbReference type="SUPFAM" id="SSF51735">
    <property type="entry name" value="NAD(P)-binding Rossmann-fold domains"/>
    <property type="match status" value="1"/>
</dbReference>
<dbReference type="PROSITE" id="PS00957">
    <property type="entry name" value="NAD_G3PDH"/>
    <property type="match status" value="1"/>
</dbReference>
<protein>
    <recommendedName>
        <fullName evidence="1">Glycerol-3-phosphate dehydrogenase [NAD(P)+]</fullName>
        <ecNumber evidence="1">1.1.1.94</ecNumber>
    </recommendedName>
    <alternativeName>
        <fullName evidence="1">NAD(P)(+)-dependent glycerol-3-phosphate dehydrogenase</fullName>
    </alternativeName>
    <alternativeName>
        <fullName evidence="1">NAD(P)H-dependent dihydroxyacetone-phosphate reductase</fullName>
    </alternativeName>
</protein>
<feature type="chain" id="PRO_1000123196" description="Glycerol-3-phosphate dehydrogenase [NAD(P)+]">
    <location>
        <begin position="1"/>
        <end position="338"/>
    </location>
</feature>
<feature type="active site" description="Proton acceptor" evidence="1">
    <location>
        <position position="194"/>
    </location>
</feature>
<feature type="binding site" evidence="1">
    <location>
        <position position="13"/>
    </location>
    <ligand>
        <name>NADPH</name>
        <dbReference type="ChEBI" id="CHEBI:57783"/>
    </ligand>
</feature>
<feature type="binding site" evidence="1">
    <location>
        <position position="14"/>
    </location>
    <ligand>
        <name>NADPH</name>
        <dbReference type="ChEBI" id="CHEBI:57783"/>
    </ligand>
</feature>
<feature type="binding site" evidence="1">
    <location>
        <position position="108"/>
    </location>
    <ligand>
        <name>NADPH</name>
        <dbReference type="ChEBI" id="CHEBI:57783"/>
    </ligand>
</feature>
<feature type="binding site" evidence="1">
    <location>
        <position position="108"/>
    </location>
    <ligand>
        <name>sn-glycerol 3-phosphate</name>
        <dbReference type="ChEBI" id="CHEBI:57597"/>
    </ligand>
</feature>
<feature type="binding site" evidence="1">
    <location>
        <position position="139"/>
    </location>
    <ligand>
        <name>sn-glycerol 3-phosphate</name>
        <dbReference type="ChEBI" id="CHEBI:57597"/>
    </ligand>
</feature>
<feature type="binding site" evidence="1">
    <location>
        <position position="141"/>
    </location>
    <ligand>
        <name>sn-glycerol 3-phosphate</name>
        <dbReference type="ChEBI" id="CHEBI:57597"/>
    </ligand>
</feature>
<feature type="binding site" evidence="1">
    <location>
        <position position="143"/>
    </location>
    <ligand>
        <name>NADPH</name>
        <dbReference type="ChEBI" id="CHEBI:57783"/>
    </ligand>
</feature>
<feature type="binding site" evidence="1">
    <location>
        <position position="194"/>
    </location>
    <ligand>
        <name>sn-glycerol 3-phosphate</name>
        <dbReference type="ChEBI" id="CHEBI:57597"/>
    </ligand>
</feature>
<feature type="binding site" evidence="1">
    <location>
        <position position="247"/>
    </location>
    <ligand>
        <name>sn-glycerol 3-phosphate</name>
        <dbReference type="ChEBI" id="CHEBI:57597"/>
    </ligand>
</feature>
<feature type="binding site" evidence="1">
    <location>
        <position position="257"/>
    </location>
    <ligand>
        <name>sn-glycerol 3-phosphate</name>
        <dbReference type="ChEBI" id="CHEBI:57597"/>
    </ligand>
</feature>
<feature type="binding site" evidence="1">
    <location>
        <position position="258"/>
    </location>
    <ligand>
        <name>NADPH</name>
        <dbReference type="ChEBI" id="CHEBI:57783"/>
    </ligand>
</feature>
<feature type="binding site" evidence="1">
    <location>
        <position position="258"/>
    </location>
    <ligand>
        <name>sn-glycerol 3-phosphate</name>
        <dbReference type="ChEBI" id="CHEBI:57597"/>
    </ligand>
</feature>
<feature type="binding site" evidence="1">
    <location>
        <position position="259"/>
    </location>
    <ligand>
        <name>sn-glycerol 3-phosphate</name>
        <dbReference type="ChEBI" id="CHEBI:57597"/>
    </ligand>
</feature>
<feature type="binding site" evidence="1">
    <location>
        <position position="282"/>
    </location>
    <ligand>
        <name>NADPH</name>
        <dbReference type="ChEBI" id="CHEBI:57783"/>
    </ligand>
</feature>
<feature type="binding site" evidence="1">
    <location>
        <position position="284"/>
    </location>
    <ligand>
        <name>NADPH</name>
        <dbReference type="ChEBI" id="CHEBI:57783"/>
    </ligand>
</feature>
<proteinExistence type="inferred from homology"/>
<organism>
    <name type="scientific">Streptococcus pneumoniae (strain Hungary19A-6)</name>
    <dbReference type="NCBI Taxonomy" id="487214"/>
    <lineage>
        <taxon>Bacteria</taxon>
        <taxon>Bacillati</taxon>
        <taxon>Bacillota</taxon>
        <taxon>Bacilli</taxon>
        <taxon>Lactobacillales</taxon>
        <taxon>Streptococcaceae</taxon>
        <taxon>Streptococcus</taxon>
    </lineage>
</organism>